<gene>
    <name evidence="1" type="primary">fabH</name>
    <name type="ordered locus">Dde_2428</name>
</gene>
<comment type="function">
    <text evidence="1">Catalyzes the condensation reaction of fatty acid synthesis by the addition to an acyl acceptor of two carbons from malonyl-ACP. Catalyzes the first condensation reaction which initiates fatty acid synthesis and may therefore play a role in governing the total rate of fatty acid production. Possesses both acetoacetyl-ACP synthase and acetyl transacylase activities. Its substrate specificity determines the biosynthesis of branched-chain and/or straight-chain of fatty acids.</text>
</comment>
<comment type="catalytic activity">
    <reaction evidence="1">
        <text>malonyl-[ACP] + acetyl-CoA + H(+) = 3-oxobutanoyl-[ACP] + CO2 + CoA</text>
        <dbReference type="Rhea" id="RHEA:12080"/>
        <dbReference type="Rhea" id="RHEA-COMP:9623"/>
        <dbReference type="Rhea" id="RHEA-COMP:9625"/>
        <dbReference type="ChEBI" id="CHEBI:15378"/>
        <dbReference type="ChEBI" id="CHEBI:16526"/>
        <dbReference type="ChEBI" id="CHEBI:57287"/>
        <dbReference type="ChEBI" id="CHEBI:57288"/>
        <dbReference type="ChEBI" id="CHEBI:78449"/>
        <dbReference type="ChEBI" id="CHEBI:78450"/>
        <dbReference type="EC" id="2.3.1.180"/>
    </reaction>
</comment>
<comment type="pathway">
    <text evidence="1">Lipid metabolism; fatty acid biosynthesis.</text>
</comment>
<comment type="subunit">
    <text evidence="1">Homodimer.</text>
</comment>
<comment type="subcellular location">
    <subcellularLocation>
        <location evidence="1">Cytoplasm</location>
    </subcellularLocation>
</comment>
<comment type="domain">
    <text evidence="1">The last Arg residue of the ACP-binding site is essential for the weak association between ACP/AcpP and FabH.</text>
</comment>
<comment type="similarity">
    <text evidence="1">Belongs to the thiolase-like superfamily. FabH family.</text>
</comment>
<organism>
    <name type="scientific">Oleidesulfovibrio alaskensis (strain ATCC BAA-1058 / DSM 17464 / G20)</name>
    <name type="common">Desulfovibrio alaskensis</name>
    <dbReference type="NCBI Taxonomy" id="207559"/>
    <lineage>
        <taxon>Bacteria</taxon>
        <taxon>Pseudomonadati</taxon>
        <taxon>Thermodesulfobacteriota</taxon>
        <taxon>Desulfovibrionia</taxon>
        <taxon>Desulfovibrionales</taxon>
        <taxon>Desulfovibrionaceae</taxon>
        <taxon>Oleidesulfovibrio</taxon>
    </lineage>
</organism>
<evidence type="ECO:0000255" key="1">
    <source>
        <dbReference type="HAMAP-Rule" id="MF_01815"/>
    </source>
</evidence>
<feature type="chain" id="PRO_1000056350" description="Beta-ketoacyl-[acyl-carrier-protein] synthase III">
    <location>
        <begin position="1"/>
        <end position="330"/>
    </location>
</feature>
<feature type="region of interest" description="ACP-binding" evidence="1">
    <location>
        <begin position="258"/>
        <end position="262"/>
    </location>
</feature>
<feature type="active site" evidence="1">
    <location>
        <position position="114"/>
    </location>
</feature>
<feature type="active site" evidence="1">
    <location>
        <position position="257"/>
    </location>
</feature>
<feature type="active site" evidence="1">
    <location>
        <position position="287"/>
    </location>
</feature>
<proteinExistence type="inferred from homology"/>
<protein>
    <recommendedName>
        <fullName evidence="1">Beta-ketoacyl-[acyl-carrier-protein] synthase III</fullName>
        <shortName evidence="1">Beta-ketoacyl-ACP synthase III</shortName>
        <shortName evidence="1">KAS III</shortName>
        <ecNumber evidence="1">2.3.1.180</ecNumber>
    </recommendedName>
    <alternativeName>
        <fullName evidence="1">3-oxoacyl-[acyl-carrier-protein] synthase 3</fullName>
    </alternativeName>
    <alternativeName>
        <fullName evidence="1">3-oxoacyl-[acyl-carrier-protein] synthase III</fullName>
    </alternativeName>
</protein>
<sequence length="330" mass="34876">MTTKSYILGFGSHAPERILTNTDMEAFVDTTDEWITTRTGIKQRHIAAEGETTSDLGAKAALQALANAGLHADALTHILVATCTPDAMCPSTACLIEHKLGVSGLMALDLNAACSGFLYALNMAQGIVALTPDAKVLVVAAEVLSRRINWNDRSTCVLFGDGAGAVIVGSHPNEGRAVEVADSLLSSDGALGDLLLISGGGTSVPYKHGQPVGDEFFVRMEGREIFKHAVRSMARVCEELLERNGIAREDVDMLLPHQANLRIIEAVGKKLGIPADKVFVNLQEYGNTSAASVPLALADADSKNLLPPGRTVLLTTFGGGFTWGAVLLRT</sequence>
<name>FABH_OLEA2</name>
<keyword id="KW-0012">Acyltransferase</keyword>
<keyword id="KW-0963">Cytoplasm</keyword>
<keyword id="KW-0275">Fatty acid biosynthesis</keyword>
<keyword id="KW-0276">Fatty acid metabolism</keyword>
<keyword id="KW-0444">Lipid biosynthesis</keyword>
<keyword id="KW-0443">Lipid metabolism</keyword>
<keyword id="KW-0511">Multifunctional enzyme</keyword>
<keyword id="KW-1185">Reference proteome</keyword>
<keyword id="KW-0808">Transferase</keyword>
<accession>Q30YM1</accession>
<reference key="1">
    <citation type="journal article" date="2011" name="J. Bacteriol.">
        <title>Complete genome sequence and updated annotation of Desulfovibrio alaskensis G20.</title>
        <authorList>
            <person name="Hauser L.J."/>
            <person name="Land M.L."/>
            <person name="Brown S.D."/>
            <person name="Larimer F."/>
            <person name="Keller K.L."/>
            <person name="Rapp-Giles B.J."/>
            <person name="Price M.N."/>
            <person name="Lin M."/>
            <person name="Bruce D.C."/>
            <person name="Detter J.C."/>
            <person name="Tapia R."/>
            <person name="Han C.S."/>
            <person name="Goodwin L.A."/>
            <person name="Cheng J.F."/>
            <person name="Pitluck S."/>
            <person name="Copeland A."/>
            <person name="Lucas S."/>
            <person name="Nolan M."/>
            <person name="Lapidus A.L."/>
            <person name="Palumbo A.V."/>
            <person name="Wall J.D."/>
        </authorList>
    </citation>
    <scope>NUCLEOTIDE SEQUENCE [LARGE SCALE GENOMIC DNA]</scope>
    <source>
        <strain>ATCC BAA-1058 / DSM 17464 / G20</strain>
    </source>
</reference>
<dbReference type="EC" id="2.3.1.180" evidence="1"/>
<dbReference type="EMBL" id="CP000112">
    <property type="protein sequence ID" value="ABB39225.1"/>
    <property type="molecule type" value="Genomic_DNA"/>
</dbReference>
<dbReference type="RefSeq" id="WP_011368294.1">
    <property type="nucleotide sequence ID" value="NC_007519.1"/>
</dbReference>
<dbReference type="SMR" id="Q30YM1"/>
<dbReference type="STRING" id="207559.Dde_2428"/>
<dbReference type="KEGG" id="dde:Dde_2428"/>
<dbReference type="eggNOG" id="COG0332">
    <property type="taxonomic scope" value="Bacteria"/>
</dbReference>
<dbReference type="HOGENOM" id="CLU_039592_3_1_7"/>
<dbReference type="UniPathway" id="UPA00094"/>
<dbReference type="Proteomes" id="UP000002710">
    <property type="component" value="Chromosome"/>
</dbReference>
<dbReference type="GO" id="GO:0005737">
    <property type="term" value="C:cytoplasm"/>
    <property type="evidence" value="ECO:0007669"/>
    <property type="project" value="UniProtKB-SubCell"/>
</dbReference>
<dbReference type="GO" id="GO:0004315">
    <property type="term" value="F:3-oxoacyl-[acyl-carrier-protein] synthase activity"/>
    <property type="evidence" value="ECO:0007669"/>
    <property type="project" value="InterPro"/>
</dbReference>
<dbReference type="GO" id="GO:0033818">
    <property type="term" value="F:beta-ketoacyl-acyl-carrier-protein synthase III activity"/>
    <property type="evidence" value="ECO:0007669"/>
    <property type="project" value="UniProtKB-UniRule"/>
</dbReference>
<dbReference type="GO" id="GO:0006633">
    <property type="term" value="P:fatty acid biosynthetic process"/>
    <property type="evidence" value="ECO:0007669"/>
    <property type="project" value="UniProtKB-UniRule"/>
</dbReference>
<dbReference type="GO" id="GO:0044550">
    <property type="term" value="P:secondary metabolite biosynthetic process"/>
    <property type="evidence" value="ECO:0007669"/>
    <property type="project" value="TreeGrafter"/>
</dbReference>
<dbReference type="CDD" id="cd00830">
    <property type="entry name" value="KAS_III"/>
    <property type="match status" value="1"/>
</dbReference>
<dbReference type="FunFam" id="3.40.47.10:FF:000004">
    <property type="entry name" value="3-oxoacyl-[acyl-carrier-protein] synthase 3"/>
    <property type="match status" value="1"/>
</dbReference>
<dbReference type="Gene3D" id="3.40.47.10">
    <property type="match status" value="1"/>
</dbReference>
<dbReference type="HAMAP" id="MF_01815">
    <property type="entry name" value="FabH"/>
    <property type="match status" value="1"/>
</dbReference>
<dbReference type="InterPro" id="IPR013747">
    <property type="entry name" value="ACP_syn_III_C"/>
</dbReference>
<dbReference type="InterPro" id="IPR013751">
    <property type="entry name" value="ACP_syn_III_N"/>
</dbReference>
<dbReference type="InterPro" id="IPR004655">
    <property type="entry name" value="FabH"/>
</dbReference>
<dbReference type="InterPro" id="IPR016039">
    <property type="entry name" value="Thiolase-like"/>
</dbReference>
<dbReference type="NCBIfam" id="TIGR00747">
    <property type="entry name" value="fabH"/>
    <property type="match status" value="1"/>
</dbReference>
<dbReference type="NCBIfam" id="NF006829">
    <property type="entry name" value="PRK09352.1"/>
    <property type="match status" value="1"/>
</dbReference>
<dbReference type="PANTHER" id="PTHR34069">
    <property type="entry name" value="3-OXOACYL-[ACYL-CARRIER-PROTEIN] SYNTHASE 3"/>
    <property type="match status" value="1"/>
</dbReference>
<dbReference type="PANTHER" id="PTHR34069:SF2">
    <property type="entry name" value="BETA-KETOACYL-[ACYL-CARRIER-PROTEIN] SYNTHASE III"/>
    <property type="match status" value="1"/>
</dbReference>
<dbReference type="Pfam" id="PF08545">
    <property type="entry name" value="ACP_syn_III"/>
    <property type="match status" value="1"/>
</dbReference>
<dbReference type="Pfam" id="PF08541">
    <property type="entry name" value="ACP_syn_III_C"/>
    <property type="match status" value="1"/>
</dbReference>
<dbReference type="SUPFAM" id="SSF53901">
    <property type="entry name" value="Thiolase-like"/>
    <property type="match status" value="1"/>
</dbReference>